<sequence length="342" mass="38083">MSINIEHAIIHEISQDSQGQLRCRLRPQPLLNGQAVEVMLDELHQTYTGKAGKGFGYFGIHGDDGEANPAFANALTQYRGGDLGFVEFSGQASKLLQEELSKYDFSQGGFLLMSCYTSITSDYLFVALLSAKSSMTVLDDMELSQNNHLDLNNIQLAARIDLTEWQADKDSRKYISFIRGRAGRKVADFFLDFMGCVEGVNTKAQNKTLMNAVEDFVASSELTKDERQQCRNKVFEYCSERFDEGADIEIKDLADELADQGMDSFYDFARGGSYDLDEEFPADKSTLRQLKKFSGTGGGVTLSFDGGHLGQRVIYDPISDTILIKGVPANLKDQLDRRLKGE</sequence>
<name>NDPA_SHEB9</name>
<keyword id="KW-0963">Cytoplasm</keyword>
<accession>A9L555</accession>
<reference key="1">
    <citation type="submission" date="2007-11" db="EMBL/GenBank/DDBJ databases">
        <title>Complete sequence of chromosome of Shewanella baltica OS195.</title>
        <authorList>
            <consortium name="US DOE Joint Genome Institute"/>
            <person name="Copeland A."/>
            <person name="Lucas S."/>
            <person name="Lapidus A."/>
            <person name="Barry K."/>
            <person name="Glavina del Rio T."/>
            <person name="Dalin E."/>
            <person name="Tice H."/>
            <person name="Pitluck S."/>
            <person name="Chain P."/>
            <person name="Malfatti S."/>
            <person name="Shin M."/>
            <person name="Vergez L."/>
            <person name="Schmutz J."/>
            <person name="Larimer F."/>
            <person name="Land M."/>
            <person name="Hauser L."/>
            <person name="Kyrpides N."/>
            <person name="Kim E."/>
            <person name="Brettar I."/>
            <person name="Rodrigues J."/>
            <person name="Konstantinidis K."/>
            <person name="Klappenbach J."/>
            <person name="Hofle M."/>
            <person name="Tiedje J."/>
            <person name="Richardson P."/>
        </authorList>
    </citation>
    <scope>NUCLEOTIDE SEQUENCE [LARGE SCALE GENOMIC DNA]</scope>
    <source>
        <strain>OS195</strain>
    </source>
</reference>
<dbReference type="EMBL" id="CP000891">
    <property type="protein sequence ID" value="ABX49817.1"/>
    <property type="molecule type" value="Genomic_DNA"/>
</dbReference>
<dbReference type="SMR" id="A9L555"/>
<dbReference type="KEGG" id="sbn:Sbal195_2649"/>
<dbReference type="HOGENOM" id="CLU_063050_0_1_6"/>
<dbReference type="Proteomes" id="UP000000770">
    <property type="component" value="Chromosome"/>
</dbReference>
<dbReference type="GO" id="GO:0043590">
    <property type="term" value="C:bacterial nucleoid"/>
    <property type="evidence" value="ECO:0007669"/>
    <property type="project" value="TreeGrafter"/>
</dbReference>
<dbReference type="GO" id="GO:0005737">
    <property type="term" value="C:cytoplasm"/>
    <property type="evidence" value="ECO:0007669"/>
    <property type="project" value="UniProtKB-UniRule"/>
</dbReference>
<dbReference type="GO" id="GO:0003690">
    <property type="term" value="F:double-stranded DNA binding"/>
    <property type="evidence" value="ECO:0007669"/>
    <property type="project" value="TreeGrafter"/>
</dbReference>
<dbReference type="GO" id="GO:0003727">
    <property type="term" value="F:single-stranded RNA binding"/>
    <property type="evidence" value="ECO:0007669"/>
    <property type="project" value="TreeGrafter"/>
</dbReference>
<dbReference type="HAMAP" id="MF_00730">
    <property type="entry name" value="NdpA"/>
    <property type="match status" value="1"/>
</dbReference>
<dbReference type="InterPro" id="IPR007358">
    <property type="entry name" value="Nucleoid_associated_NdpA"/>
</dbReference>
<dbReference type="NCBIfam" id="NF001557">
    <property type="entry name" value="PRK00378.1"/>
    <property type="match status" value="1"/>
</dbReference>
<dbReference type="PANTHER" id="PTHR38772">
    <property type="match status" value="1"/>
</dbReference>
<dbReference type="PANTHER" id="PTHR38772:SF1">
    <property type="entry name" value="NUCLEOID-ASSOCIATED PROTEIN YEJK"/>
    <property type="match status" value="1"/>
</dbReference>
<dbReference type="Pfam" id="PF04245">
    <property type="entry name" value="NA37"/>
    <property type="match status" value="1"/>
</dbReference>
<evidence type="ECO:0000255" key="1">
    <source>
        <dbReference type="HAMAP-Rule" id="MF_00730"/>
    </source>
</evidence>
<proteinExistence type="inferred from homology"/>
<protein>
    <recommendedName>
        <fullName evidence="1">Nucleoid-associated protein Sbal195_2649</fullName>
    </recommendedName>
</protein>
<comment type="subcellular location">
    <subcellularLocation>
        <location evidence="1">Cytoplasm</location>
        <location evidence="1">Nucleoid</location>
    </subcellularLocation>
</comment>
<comment type="similarity">
    <text evidence="1">Belongs to the YejK family.</text>
</comment>
<feature type="chain" id="PRO_1000083332" description="Nucleoid-associated protein Sbal195_2649">
    <location>
        <begin position="1"/>
        <end position="342"/>
    </location>
</feature>
<gene>
    <name type="ordered locus">Sbal195_2649</name>
</gene>
<organism>
    <name type="scientific">Shewanella baltica (strain OS195)</name>
    <dbReference type="NCBI Taxonomy" id="399599"/>
    <lineage>
        <taxon>Bacteria</taxon>
        <taxon>Pseudomonadati</taxon>
        <taxon>Pseudomonadota</taxon>
        <taxon>Gammaproteobacteria</taxon>
        <taxon>Alteromonadales</taxon>
        <taxon>Shewanellaceae</taxon>
        <taxon>Shewanella</taxon>
    </lineage>
</organism>